<protein>
    <recommendedName>
        <fullName evidence="1">Uridine kinase</fullName>
        <ecNumber evidence="1">2.7.1.48</ecNumber>
    </recommendedName>
    <alternativeName>
        <fullName evidence="1">Cytidine monophosphokinase</fullName>
    </alternativeName>
    <alternativeName>
        <fullName evidence="1">Uridine monophosphokinase</fullName>
    </alternativeName>
</protein>
<organism>
    <name type="scientific">Haemophilus influenzae (strain PittEE)</name>
    <dbReference type="NCBI Taxonomy" id="374930"/>
    <lineage>
        <taxon>Bacteria</taxon>
        <taxon>Pseudomonadati</taxon>
        <taxon>Pseudomonadota</taxon>
        <taxon>Gammaproteobacteria</taxon>
        <taxon>Pasteurellales</taxon>
        <taxon>Pasteurellaceae</taxon>
        <taxon>Haemophilus</taxon>
    </lineage>
</organism>
<dbReference type="EC" id="2.7.1.48" evidence="1"/>
<dbReference type="EMBL" id="CP000671">
    <property type="protein sequence ID" value="ABQ97968.1"/>
    <property type="molecule type" value="Genomic_DNA"/>
</dbReference>
<dbReference type="SMR" id="A5UB17"/>
<dbReference type="KEGG" id="hip:CGSHiEE_02635"/>
<dbReference type="HOGENOM" id="CLU_021278_1_2_6"/>
<dbReference type="UniPathway" id="UPA00574">
    <property type="reaction ID" value="UER00637"/>
</dbReference>
<dbReference type="UniPathway" id="UPA00579">
    <property type="reaction ID" value="UER00640"/>
</dbReference>
<dbReference type="GO" id="GO:0005737">
    <property type="term" value="C:cytoplasm"/>
    <property type="evidence" value="ECO:0007669"/>
    <property type="project" value="UniProtKB-SubCell"/>
</dbReference>
<dbReference type="GO" id="GO:0005524">
    <property type="term" value="F:ATP binding"/>
    <property type="evidence" value="ECO:0007669"/>
    <property type="project" value="UniProtKB-UniRule"/>
</dbReference>
<dbReference type="GO" id="GO:0043771">
    <property type="term" value="F:cytidine kinase activity"/>
    <property type="evidence" value="ECO:0007669"/>
    <property type="project" value="RHEA"/>
</dbReference>
<dbReference type="GO" id="GO:0004849">
    <property type="term" value="F:uridine kinase activity"/>
    <property type="evidence" value="ECO:0007669"/>
    <property type="project" value="UniProtKB-UniRule"/>
</dbReference>
<dbReference type="GO" id="GO:0044211">
    <property type="term" value="P:CTP salvage"/>
    <property type="evidence" value="ECO:0007669"/>
    <property type="project" value="UniProtKB-UniRule"/>
</dbReference>
<dbReference type="GO" id="GO:0044206">
    <property type="term" value="P:UMP salvage"/>
    <property type="evidence" value="ECO:0007669"/>
    <property type="project" value="UniProtKB-UniRule"/>
</dbReference>
<dbReference type="CDD" id="cd02023">
    <property type="entry name" value="UMPK"/>
    <property type="match status" value="1"/>
</dbReference>
<dbReference type="Gene3D" id="3.40.50.300">
    <property type="entry name" value="P-loop containing nucleotide triphosphate hydrolases"/>
    <property type="match status" value="1"/>
</dbReference>
<dbReference type="HAMAP" id="MF_00551">
    <property type="entry name" value="Uridine_kinase"/>
    <property type="match status" value="1"/>
</dbReference>
<dbReference type="InterPro" id="IPR027417">
    <property type="entry name" value="P-loop_NTPase"/>
</dbReference>
<dbReference type="InterPro" id="IPR006083">
    <property type="entry name" value="PRK/URK"/>
</dbReference>
<dbReference type="InterPro" id="IPR026008">
    <property type="entry name" value="Uridine_kinase"/>
</dbReference>
<dbReference type="InterPro" id="IPR000764">
    <property type="entry name" value="Uridine_kinase-like"/>
</dbReference>
<dbReference type="NCBIfam" id="NF004018">
    <property type="entry name" value="PRK05480.1"/>
    <property type="match status" value="1"/>
</dbReference>
<dbReference type="NCBIfam" id="TIGR00235">
    <property type="entry name" value="udk"/>
    <property type="match status" value="1"/>
</dbReference>
<dbReference type="PANTHER" id="PTHR10285">
    <property type="entry name" value="URIDINE KINASE"/>
    <property type="match status" value="1"/>
</dbReference>
<dbReference type="Pfam" id="PF00485">
    <property type="entry name" value="PRK"/>
    <property type="match status" value="1"/>
</dbReference>
<dbReference type="PRINTS" id="PR00988">
    <property type="entry name" value="URIDINKINASE"/>
</dbReference>
<dbReference type="SUPFAM" id="SSF52540">
    <property type="entry name" value="P-loop containing nucleoside triphosphate hydrolases"/>
    <property type="match status" value="1"/>
</dbReference>
<accession>A5UB17</accession>
<evidence type="ECO:0000255" key="1">
    <source>
        <dbReference type="HAMAP-Rule" id="MF_00551"/>
    </source>
</evidence>
<sequence>MSNPSCIIIAITGASASGKSSISSTVHKELCNELGCQEIGIITEDSYYKDQSHLEMTERVKTNYDHPSSMDRDLLIQHLKNLKNGSAVDVPVYSYVEHTRTNETTHFTPKRIVILEGILLLTDERVRQLADISVFVDTPLDICFIRRLQRDMEERGRSLQSVIDQYRATVRPMFLQFIEPSKQYADIVIPRGGKNRIAINMLKAQILHLLNQK</sequence>
<keyword id="KW-0067">ATP-binding</keyword>
<keyword id="KW-0963">Cytoplasm</keyword>
<keyword id="KW-0418">Kinase</keyword>
<keyword id="KW-0547">Nucleotide-binding</keyword>
<keyword id="KW-0808">Transferase</keyword>
<reference key="1">
    <citation type="journal article" date="2007" name="Genome Biol.">
        <title>Characterization and modeling of the Haemophilus influenzae core and supragenomes based on the complete genomic sequences of Rd and 12 clinical nontypeable strains.</title>
        <authorList>
            <person name="Hogg J.S."/>
            <person name="Hu F.Z."/>
            <person name="Janto B."/>
            <person name="Boissy R."/>
            <person name="Hayes J."/>
            <person name="Keefe R."/>
            <person name="Post J.C."/>
            <person name="Ehrlich G.D."/>
        </authorList>
    </citation>
    <scope>NUCLEOTIDE SEQUENCE [LARGE SCALE GENOMIC DNA]</scope>
    <source>
        <strain>PittEE</strain>
    </source>
</reference>
<proteinExistence type="inferred from homology"/>
<gene>
    <name evidence="1" type="primary">udk</name>
    <name type="ordered locus">CGSHiEE_02635</name>
</gene>
<feature type="chain" id="PRO_1000017878" description="Uridine kinase">
    <location>
        <begin position="1"/>
        <end position="213"/>
    </location>
</feature>
<feature type="binding site" evidence="1">
    <location>
        <begin position="13"/>
        <end position="20"/>
    </location>
    <ligand>
        <name>ATP</name>
        <dbReference type="ChEBI" id="CHEBI:30616"/>
    </ligand>
</feature>
<name>URK_HAEIE</name>
<comment type="catalytic activity">
    <reaction evidence="1">
        <text>uridine + ATP = UMP + ADP + H(+)</text>
        <dbReference type="Rhea" id="RHEA:16825"/>
        <dbReference type="ChEBI" id="CHEBI:15378"/>
        <dbReference type="ChEBI" id="CHEBI:16704"/>
        <dbReference type="ChEBI" id="CHEBI:30616"/>
        <dbReference type="ChEBI" id="CHEBI:57865"/>
        <dbReference type="ChEBI" id="CHEBI:456216"/>
        <dbReference type="EC" id="2.7.1.48"/>
    </reaction>
</comment>
<comment type="catalytic activity">
    <reaction evidence="1">
        <text>cytidine + ATP = CMP + ADP + H(+)</text>
        <dbReference type="Rhea" id="RHEA:24674"/>
        <dbReference type="ChEBI" id="CHEBI:15378"/>
        <dbReference type="ChEBI" id="CHEBI:17562"/>
        <dbReference type="ChEBI" id="CHEBI:30616"/>
        <dbReference type="ChEBI" id="CHEBI:60377"/>
        <dbReference type="ChEBI" id="CHEBI:456216"/>
        <dbReference type="EC" id="2.7.1.48"/>
    </reaction>
</comment>
<comment type="pathway">
    <text evidence="1">Pyrimidine metabolism; CTP biosynthesis via salvage pathway; CTP from cytidine: step 1/3.</text>
</comment>
<comment type="pathway">
    <text evidence="1">Pyrimidine metabolism; UMP biosynthesis via salvage pathway; UMP from uridine: step 1/1.</text>
</comment>
<comment type="subcellular location">
    <subcellularLocation>
        <location evidence="1">Cytoplasm</location>
    </subcellularLocation>
</comment>
<comment type="similarity">
    <text evidence="1">Belongs to the uridine kinase family.</text>
</comment>